<comment type="function">
    <text evidence="1">Required for insertion of 4Fe-4S clusters for at least IspG.</text>
</comment>
<comment type="cofactor">
    <cofactor evidence="1">
        <name>iron-sulfur cluster</name>
        <dbReference type="ChEBI" id="CHEBI:30408"/>
    </cofactor>
    <text evidence="1">Binds 1 iron-sulfur cluster per subunit.</text>
</comment>
<comment type="subunit">
    <text evidence="1">Homodimer.</text>
</comment>
<comment type="similarity">
    <text evidence="1">Belongs to the HesB/IscA family.</text>
</comment>
<reference key="1">
    <citation type="journal article" date="2006" name="Appl. Environ. Microbiol.">
        <title>Complete genome sequence of the marine, chemolithoautotrophic, ammonia-oxidizing bacterium Nitrosococcus oceani ATCC 19707.</title>
        <authorList>
            <person name="Klotz M.G."/>
            <person name="Arp D.J."/>
            <person name="Chain P.S.G."/>
            <person name="El-Sheikh A.F."/>
            <person name="Hauser L.J."/>
            <person name="Hommes N.G."/>
            <person name="Larimer F.W."/>
            <person name="Malfatti S.A."/>
            <person name="Norton J.M."/>
            <person name="Poret-Peterson A.T."/>
            <person name="Vergez L.M."/>
            <person name="Ward B.B."/>
        </authorList>
    </citation>
    <scope>NUCLEOTIDE SEQUENCE [LARGE SCALE GENOMIC DNA]</scope>
    <source>
        <strain>ATCC 19707 / BCRC 17464 / JCM 30415 / NCIMB 11848 / C-107</strain>
    </source>
</reference>
<gene>
    <name evidence="1" type="primary">erpA</name>
    <name type="ordered locus">Noc_1044</name>
</gene>
<protein>
    <recommendedName>
        <fullName evidence="1">Iron-sulfur cluster insertion protein ErpA</fullName>
    </recommendedName>
</protein>
<evidence type="ECO:0000255" key="1">
    <source>
        <dbReference type="HAMAP-Rule" id="MF_01380"/>
    </source>
</evidence>
<feature type="chain" id="PRO_0000311511" description="Iron-sulfur cluster insertion protein ErpA">
    <location>
        <begin position="1"/>
        <end position="116"/>
    </location>
</feature>
<feature type="binding site" evidence="1">
    <location>
        <position position="44"/>
    </location>
    <ligand>
        <name>iron-sulfur cluster</name>
        <dbReference type="ChEBI" id="CHEBI:30408"/>
    </ligand>
</feature>
<feature type="binding site" evidence="1">
    <location>
        <position position="108"/>
    </location>
    <ligand>
        <name>iron-sulfur cluster</name>
        <dbReference type="ChEBI" id="CHEBI:30408"/>
    </ligand>
</feature>
<feature type="binding site" evidence="1">
    <location>
        <position position="110"/>
    </location>
    <ligand>
        <name>iron-sulfur cluster</name>
        <dbReference type="ChEBI" id="CHEBI:30408"/>
    </ligand>
</feature>
<proteinExistence type="inferred from homology"/>
<accession>Q3JC94</accession>
<sequence>MNVTNAMPNPLIFTDIAAGKVKELIEEEGNDKLMLRVFITGGGCSGFQYGFTFDETSHEGDTRVKNGGVTLLIDPTSYQYLVGAEIDYTEGLEGAQFVIRNPNAETTCGCGSSFSP</sequence>
<keyword id="KW-0408">Iron</keyword>
<keyword id="KW-0411">Iron-sulfur</keyword>
<keyword id="KW-0479">Metal-binding</keyword>
<keyword id="KW-1185">Reference proteome</keyword>
<name>ERPA_NITOC</name>
<dbReference type="EMBL" id="CP000127">
    <property type="protein sequence ID" value="ABA57552.1"/>
    <property type="molecule type" value="Genomic_DNA"/>
</dbReference>
<dbReference type="RefSeq" id="WP_002810132.1">
    <property type="nucleotide sequence ID" value="NC_007484.1"/>
</dbReference>
<dbReference type="SMR" id="Q3JC94"/>
<dbReference type="FunCoup" id="Q3JC94">
    <property type="interactions" value="446"/>
</dbReference>
<dbReference type="STRING" id="323261.Noc_1044"/>
<dbReference type="KEGG" id="noc:Noc_1044"/>
<dbReference type="eggNOG" id="COG0316">
    <property type="taxonomic scope" value="Bacteria"/>
</dbReference>
<dbReference type="HOGENOM" id="CLU_069054_5_3_6"/>
<dbReference type="InParanoid" id="Q3JC94"/>
<dbReference type="Proteomes" id="UP000006838">
    <property type="component" value="Chromosome"/>
</dbReference>
<dbReference type="GO" id="GO:0051537">
    <property type="term" value="F:2 iron, 2 sulfur cluster binding"/>
    <property type="evidence" value="ECO:0007669"/>
    <property type="project" value="TreeGrafter"/>
</dbReference>
<dbReference type="GO" id="GO:0051539">
    <property type="term" value="F:4 iron, 4 sulfur cluster binding"/>
    <property type="evidence" value="ECO:0007669"/>
    <property type="project" value="TreeGrafter"/>
</dbReference>
<dbReference type="GO" id="GO:0005506">
    <property type="term" value="F:iron ion binding"/>
    <property type="evidence" value="ECO:0007669"/>
    <property type="project" value="UniProtKB-UniRule"/>
</dbReference>
<dbReference type="GO" id="GO:0016226">
    <property type="term" value="P:iron-sulfur cluster assembly"/>
    <property type="evidence" value="ECO:0007669"/>
    <property type="project" value="UniProtKB-UniRule"/>
</dbReference>
<dbReference type="FunFam" id="2.60.300.12:FF:000002">
    <property type="entry name" value="Iron-sulfur cluster insertion protein ErpA"/>
    <property type="match status" value="1"/>
</dbReference>
<dbReference type="Gene3D" id="2.60.300.12">
    <property type="entry name" value="HesB-like domain"/>
    <property type="match status" value="1"/>
</dbReference>
<dbReference type="HAMAP" id="MF_01380">
    <property type="entry name" value="Fe_S_insert_ErpA"/>
    <property type="match status" value="1"/>
</dbReference>
<dbReference type="InterPro" id="IPR000361">
    <property type="entry name" value="FeS_biogenesis"/>
</dbReference>
<dbReference type="InterPro" id="IPR016092">
    <property type="entry name" value="FeS_cluster_insertion"/>
</dbReference>
<dbReference type="InterPro" id="IPR017870">
    <property type="entry name" value="FeS_cluster_insertion_CS"/>
</dbReference>
<dbReference type="InterPro" id="IPR023063">
    <property type="entry name" value="FeS_cluster_insertion_RrpA"/>
</dbReference>
<dbReference type="InterPro" id="IPR035903">
    <property type="entry name" value="HesB-like_dom_sf"/>
</dbReference>
<dbReference type="NCBIfam" id="TIGR00049">
    <property type="entry name" value="iron-sulfur cluster assembly accessory protein"/>
    <property type="match status" value="1"/>
</dbReference>
<dbReference type="NCBIfam" id="NF010147">
    <property type="entry name" value="PRK13623.1"/>
    <property type="match status" value="1"/>
</dbReference>
<dbReference type="PANTHER" id="PTHR43011">
    <property type="entry name" value="IRON-SULFUR CLUSTER ASSEMBLY 2 HOMOLOG, MITOCHONDRIAL"/>
    <property type="match status" value="1"/>
</dbReference>
<dbReference type="PANTHER" id="PTHR43011:SF1">
    <property type="entry name" value="IRON-SULFUR CLUSTER ASSEMBLY 2 HOMOLOG, MITOCHONDRIAL"/>
    <property type="match status" value="1"/>
</dbReference>
<dbReference type="Pfam" id="PF01521">
    <property type="entry name" value="Fe-S_biosyn"/>
    <property type="match status" value="1"/>
</dbReference>
<dbReference type="SUPFAM" id="SSF89360">
    <property type="entry name" value="HesB-like domain"/>
    <property type="match status" value="1"/>
</dbReference>
<dbReference type="PROSITE" id="PS01152">
    <property type="entry name" value="HESB"/>
    <property type="match status" value="1"/>
</dbReference>
<organism>
    <name type="scientific">Nitrosococcus oceani (strain ATCC 19707 / BCRC 17464 / JCM 30415 / NCIMB 11848 / C-107)</name>
    <dbReference type="NCBI Taxonomy" id="323261"/>
    <lineage>
        <taxon>Bacteria</taxon>
        <taxon>Pseudomonadati</taxon>
        <taxon>Pseudomonadota</taxon>
        <taxon>Gammaproteobacteria</taxon>
        <taxon>Chromatiales</taxon>
        <taxon>Chromatiaceae</taxon>
        <taxon>Nitrosococcus</taxon>
    </lineage>
</organism>